<accession>Q56797</accession>
<feature type="signal peptide" evidence="2">
    <location>
        <begin position="1"/>
        <end position="25"/>
    </location>
</feature>
<feature type="chain" id="PRO_0000006027" description="Copper resistance protein C">
    <location>
        <begin position="26"/>
        <end position="127"/>
    </location>
</feature>
<feature type="binding site" evidence="1">
    <location>
        <position position="26"/>
    </location>
    <ligand>
        <name>Cu cation</name>
        <dbReference type="ChEBI" id="CHEBI:23378"/>
        <label>1</label>
    </ligand>
</feature>
<feature type="binding site" evidence="1">
    <location>
        <position position="65"/>
    </location>
    <ligand>
        <name>Cu cation</name>
        <dbReference type="ChEBI" id="CHEBI:23378"/>
        <label>2</label>
    </ligand>
</feature>
<feature type="binding site" evidence="1">
    <location>
        <position position="68"/>
    </location>
    <ligand>
        <name>Cu cation</name>
        <dbReference type="ChEBI" id="CHEBI:23378"/>
        <label>2</label>
    </ligand>
</feature>
<feature type="binding site" evidence="1">
    <location>
        <position position="71"/>
    </location>
    <ligand>
        <name>Cu cation</name>
        <dbReference type="ChEBI" id="CHEBI:23378"/>
        <label>2</label>
    </ligand>
</feature>
<feature type="binding site" evidence="1">
    <location>
        <position position="76"/>
    </location>
    <ligand>
        <name>Cu cation</name>
        <dbReference type="ChEBI" id="CHEBI:23378"/>
        <label>2</label>
    </ligand>
</feature>
<feature type="binding site" evidence="1">
    <location>
        <position position="116"/>
    </location>
    <ligand>
        <name>Cu cation</name>
        <dbReference type="ChEBI" id="CHEBI:23378"/>
        <label>1</label>
    </ligand>
</feature>
<organism>
    <name type="scientific">Xanthomonas campestris pv. juglandis</name>
    <name type="common">Xanthomonas arboricola pv. juglandis</name>
    <dbReference type="NCBI Taxonomy" id="195709"/>
    <lineage>
        <taxon>Bacteria</taxon>
        <taxon>Pseudomonadati</taxon>
        <taxon>Pseudomonadota</taxon>
        <taxon>Gammaproteobacteria</taxon>
        <taxon>Lysobacterales</taxon>
        <taxon>Lysobacteraceae</taxon>
        <taxon>Xanthomonas</taxon>
    </lineage>
</organism>
<comment type="function">
    <text evidence="1">Copper-binding protein involved in copper resistance.</text>
</comment>
<comment type="subcellular location">
    <subcellularLocation>
        <location evidence="1">Periplasm</location>
    </subcellularLocation>
</comment>
<comment type="similarity">
    <text evidence="3">Belongs to the CopC family.</text>
</comment>
<reference key="1">
    <citation type="journal article" date="1994" name="J. Bacteriol.">
        <title>Molecular cloning, chromosomal mapping, and sequence analysis of copper resistance genes from Xanthomonas campestris pv. juglandis: homology with small blue copper proteins and multicopper oxidase.</title>
        <authorList>
            <person name="Lee Y.A."/>
            <person name="Hendson M."/>
            <person name="Panopoulos N.J."/>
            <person name="Schroth M.N."/>
        </authorList>
    </citation>
    <scope>NUCLEOTIDE SEQUENCE [GENOMIC DNA]</scope>
    <source>
        <strain>C5</strain>
    </source>
</reference>
<evidence type="ECO:0000250" key="1">
    <source>
        <dbReference type="UniProtKB" id="P12376"/>
    </source>
</evidence>
<evidence type="ECO:0000255" key="2"/>
<evidence type="ECO:0000305" key="3"/>
<proteinExistence type="inferred from homology"/>
<dbReference type="EMBL" id="L19222">
    <property type="protein sequence ID" value="AAA72015.1"/>
    <property type="molecule type" value="Unassigned_DNA"/>
</dbReference>
<dbReference type="PIR" id="C36868">
    <property type="entry name" value="C36868"/>
</dbReference>
<dbReference type="RefSeq" id="WP_053045061.1">
    <property type="nucleotide sequence ID" value="NZ_CP012251.1"/>
</dbReference>
<dbReference type="SMR" id="Q56797"/>
<dbReference type="GO" id="GO:0042597">
    <property type="term" value="C:periplasmic space"/>
    <property type="evidence" value="ECO:0007669"/>
    <property type="project" value="UniProtKB-SubCell"/>
</dbReference>
<dbReference type="GO" id="GO:0005886">
    <property type="term" value="C:plasma membrane"/>
    <property type="evidence" value="ECO:0007669"/>
    <property type="project" value="TreeGrafter"/>
</dbReference>
<dbReference type="GO" id="GO:0005507">
    <property type="term" value="F:copper ion binding"/>
    <property type="evidence" value="ECO:0007669"/>
    <property type="project" value="InterPro"/>
</dbReference>
<dbReference type="GO" id="GO:0006825">
    <property type="term" value="P:copper ion transport"/>
    <property type="evidence" value="ECO:0007669"/>
    <property type="project" value="InterPro"/>
</dbReference>
<dbReference type="GO" id="GO:0046688">
    <property type="term" value="P:response to copper ion"/>
    <property type="evidence" value="ECO:0007669"/>
    <property type="project" value="InterPro"/>
</dbReference>
<dbReference type="Gene3D" id="2.60.40.1220">
    <property type="match status" value="1"/>
</dbReference>
<dbReference type="InterPro" id="IPR047685">
    <property type="entry name" value="CopC-like"/>
</dbReference>
<dbReference type="InterPro" id="IPR032694">
    <property type="entry name" value="CopC/D"/>
</dbReference>
<dbReference type="InterPro" id="IPR007348">
    <property type="entry name" value="CopC_dom"/>
</dbReference>
<dbReference type="InterPro" id="IPR014755">
    <property type="entry name" value="Cu-Rt/internalin_Ig-like"/>
</dbReference>
<dbReference type="InterPro" id="IPR014756">
    <property type="entry name" value="Ig_E-set"/>
</dbReference>
<dbReference type="NCBIfam" id="NF033814">
    <property type="entry name" value="copper_CopC"/>
    <property type="match status" value="1"/>
</dbReference>
<dbReference type="PANTHER" id="PTHR34820">
    <property type="entry name" value="INNER MEMBRANE PROTEIN YEBZ"/>
    <property type="match status" value="1"/>
</dbReference>
<dbReference type="PANTHER" id="PTHR34820:SF4">
    <property type="entry name" value="INNER MEMBRANE PROTEIN YEBZ"/>
    <property type="match status" value="1"/>
</dbReference>
<dbReference type="Pfam" id="PF04234">
    <property type="entry name" value="CopC"/>
    <property type="match status" value="1"/>
</dbReference>
<dbReference type="SUPFAM" id="SSF81296">
    <property type="entry name" value="E set domains"/>
    <property type="match status" value="1"/>
</dbReference>
<name>COPC_XANCJ</name>
<protein>
    <recommendedName>
        <fullName evidence="3">Copper resistance protein C</fullName>
    </recommendedName>
</protein>
<keyword id="KW-0186">Copper</keyword>
<keyword id="KW-0479">Metal-binding</keyword>
<keyword id="KW-0574">Periplasm</keyword>
<keyword id="KW-0614">Plasmid</keyword>
<keyword id="KW-0732">Signal</keyword>
<sequence length="127" mass="13273">MFAFRSIATTVVMVAASLASASAFAHPKLVVSSPVDNATVSAPATINLSFTEKLLPSLSGAELTMTKMPGMEMPPMKVAAKAAPSADGKSLIVTPDKPLSTGTYRLHWRVVSNDTHPVKGSISFSVK</sequence>